<gene>
    <name type="primary">PIP5K1</name>
    <name type="synonym">P5K1</name>
    <name type="ordered locus">At1g21980</name>
    <name type="ORF">F2E2.1</name>
</gene>
<protein>
    <recommendedName>
        <fullName>Phosphatidylinositol 4-phosphate 5-kinase 1</fullName>
        <shortName>AtPIP5K1</shortName>
        <ecNumber>2.7.1.68</ecNumber>
    </recommendedName>
    <alternativeName>
        <fullName>1-phosphatidylinositol 4-phosphate kinase 1</fullName>
    </alternativeName>
    <alternativeName>
        <fullName>Diphosphoinositide kinase 1</fullName>
    </alternativeName>
    <alternativeName>
        <fullName>PtdIns(4)P-5-kinase 1</fullName>
    </alternativeName>
</protein>
<organism>
    <name type="scientific">Arabidopsis thaliana</name>
    <name type="common">Mouse-ear cress</name>
    <dbReference type="NCBI Taxonomy" id="3702"/>
    <lineage>
        <taxon>Eukaryota</taxon>
        <taxon>Viridiplantae</taxon>
        <taxon>Streptophyta</taxon>
        <taxon>Embryophyta</taxon>
        <taxon>Tracheophyta</taxon>
        <taxon>Spermatophyta</taxon>
        <taxon>Magnoliopsida</taxon>
        <taxon>eudicotyledons</taxon>
        <taxon>Gunneridae</taxon>
        <taxon>Pentapetalae</taxon>
        <taxon>rosids</taxon>
        <taxon>malvids</taxon>
        <taxon>Brassicales</taxon>
        <taxon>Brassicaceae</taxon>
        <taxon>Camelineae</taxon>
        <taxon>Arabidopsis</taxon>
    </lineage>
</organism>
<accession>Q56YP2</accession>
<accession>O22503</accession>
<accession>O82120</accession>
<accession>Q9LM65</accession>
<evidence type="ECO:0000250" key="1"/>
<evidence type="ECO:0000255" key="2">
    <source>
        <dbReference type="PROSITE-ProRule" id="PRU00781"/>
    </source>
</evidence>
<evidence type="ECO:0000269" key="3">
    <source>
    </source>
</evidence>
<evidence type="ECO:0000269" key="4">
    <source>
    </source>
</evidence>
<evidence type="ECO:0000269" key="5">
    <source>
    </source>
</evidence>
<evidence type="ECO:0000305" key="6"/>
<keyword id="KW-0067">ATP-binding</keyword>
<keyword id="KW-0418">Kinase</keyword>
<keyword id="KW-0547">Nucleotide-binding</keyword>
<keyword id="KW-0597">Phosphoprotein</keyword>
<keyword id="KW-1185">Reference proteome</keyword>
<keyword id="KW-0677">Repeat</keyword>
<keyword id="KW-0346">Stress response</keyword>
<keyword id="KW-0808">Transferase</keyword>
<proteinExistence type="evidence at protein level"/>
<name>PI5K1_ARATH</name>
<feature type="chain" id="PRO_0000185473" description="Phosphatidylinositol 4-phosphate 5-kinase 1">
    <location>
        <begin position="1"/>
        <end position="752"/>
    </location>
</feature>
<feature type="repeat" description="MORN 1">
    <location>
        <begin position="81"/>
        <end position="103"/>
    </location>
</feature>
<feature type="repeat" description="MORN 2">
    <location>
        <begin position="104"/>
        <end position="126"/>
    </location>
</feature>
<feature type="repeat" description="MORN 3">
    <location>
        <begin position="127"/>
        <end position="149"/>
    </location>
</feature>
<feature type="repeat" description="MORN 4">
    <location>
        <begin position="150"/>
        <end position="172"/>
    </location>
</feature>
<feature type="repeat" description="MORN 5">
    <location>
        <begin position="173"/>
        <end position="195"/>
    </location>
</feature>
<feature type="repeat" description="MORN 6">
    <location>
        <begin position="196"/>
        <end position="218"/>
    </location>
</feature>
<feature type="repeat" description="MORN 7">
    <location>
        <begin position="219"/>
        <end position="241"/>
    </location>
</feature>
<feature type="domain" description="PIPK" evidence="2">
    <location>
        <begin position="349"/>
        <end position="748"/>
    </location>
</feature>
<feature type="region of interest" description="Activation loop" evidence="1">
    <location>
        <begin position="708"/>
        <end position="729"/>
    </location>
</feature>
<feature type="sequence conflict" description="In Ref. 1; AAB82658." evidence="6" ref="1">
    <original>Q</original>
    <variation>P</variation>
    <location>
        <position position="182"/>
    </location>
</feature>
<feature type="sequence conflict" description="In Ref. 1; AAB82658." evidence="6" ref="1">
    <original>G</original>
    <variation>S</variation>
    <location>
        <position position="186"/>
    </location>
</feature>
<feature type="sequence conflict" description="In Ref. 2; BAA33501." evidence="6" ref="2">
    <original>S</original>
    <variation>I</variation>
    <location>
        <position position="202"/>
    </location>
</feature>
<feature type="sequence conflict" description="In Ref. 2; BAA33501." evidence="6" ref="2">
    <original>C</original>
    <variation>Y</variation>
    <location>
        <position position="416"/>
    </location>
</feature>
<feature type="sequence conflict" description="In Ref. 2; BAA33501." evidence="6" ref="2">
    <original>V</original>
    <variation>M</variation>
    <location>
        <position position="419"/>
    </location>
</feature>
<feature type="sequence conflict" description="In Ref. 2; BAA33501." evidence="6" ref="2">
    <original>F</original>
    <variation>L</variation>
    <location>
        <position position="456"/>
    </location>
</feature>
<feature type="sequence conflict" description="In Ref. 2; BAA33501." evidence="6" ref="2">
    <original>E</original>
    <variation>D</variation>
    <location>
        <position position="588"/>
    </location>
</feature>
<feature type="sequence conflict" description="In Ref. 2; BAA33501." evidence="6" ref="2">
    <original>H</original>
    <variation>P</variation>
    <location>
        <position position="602"/>
    </location>
</feature>
<reference key="1">
    <citation type="online journal article" date="1997" name="Plant Gene Register">
        <title>An Arabidopsis phosphatidylinositol-4-phosphate 5-kinase homolog with seven novel repeats rich in aromatic and glycine residues.</title>
        <authorList>
            <person name="Satterlee J.S."/>
            <person name="Sussman M.R."/>
        </authorList>
        <locator>PGR97-150</locator>
    </citation>
    <scope>NUCLEOTIDE SEQUENCE [MRNA]</scope>
    <source>
        <strain>cv. Columbia</strain>
    </source>
</reference>
<reference key="2">
    <citation type="journal article" date="1998" name="Plant J.">
        <title>A gene encoding phosphatidylinositol-4-phosphate 5-kinase is induced by water stress and abscisic acid in Arabidopsis thaliana.</title>
        <authorList>
            <person name="Mikami K."/>
            <person name="Katagiri T."/>
            <person name="Iuchi S."/>
            <person name="Yamaguchi-Shinozaki K."/>
            <person name="Shinozaki K."/>
        </authorList>
    </citation>
    <scope>NUCLEOTIDE SEQUENCE [MRNA]</scope>
    <scope>TISSUE SPECIFICITY</scope>
    <scope>INDUCTION</scope>
    <source>
        <strain>cv. Columbia</strain>
    </source>
</reference>
<reference key="3">
    <citation type="journal article" date="2000" name="Nature">
        <title>Sequence and analysis of chromosome 1 of the plant Arabidopsis thaliana.</title>
        <authorList>
            <person name="Theologis A."/>
            <person name="Ecker J.R."/>
            <person name="Palm C.J."/>
            <person name="Federspiel N.A."/>
            <person name="Kaul S."/>
            <person name="White O."/>
            <person name="Alonso J."/>
            <person name="Altafi H."/>
            <person name="Araujo R."/>
            <person name="Bowman C.L."/>
            <person name="Brooks S.Y."/>
            <person name="Buehler E."/>
            <person name="Chan A."/>
            <person name="Chao Q."/>
            <person name="Chen H."/>
            <person name="Cheuk R.F."/>
            <person name="Chin C.W."/>
            <person name="Chung M.K."/>
            <person name="Conn L."/>
            <person name="Conway A.B."/>
            <person name="Conway A.R."/>
            <person name="Creasy T.H."/>
            <person name="Dewar K."/>
            <person name="Dunn P."/>
            <person name="Etgu P."/>
            <person name="Feldblyum T.V."/>
            <person name="Feng J.-D."/>
            <person name="Fong B."/>
            <person name="Fujii C.Y."/>
            <person name="Gill J.E."/>
            <person name="Goldsmith A.D."/>
            <person name="Haas B."/>
            <person name="Hansen N.F."/>
            <person name="Hughes B."/>
            <person name="Huizar L."/>
            <person name="Hunter J.L."/>
            <person name="Jenkins J."/>
            <person name="Johnson-Hopson C."/>
            <person name="Khan S."/>
            <person name="Khaykin E."/>
            <person name="Kim C.J."/>
            <person name="Koo H.L."/>
            <person name="Kremenetskaia I."/>
            <person name="Kurtz D.B."/>
            <person name="Kwan A."/>
            <person name="Lam B."/>
            <person name="Langin-Hooper S."/>
            <person name="Lee A."/>
            <person name="Lee J.M."/>
            <person name="Lenz C.A."/>
            <person name="Li J.H."/>
            <person name="Li Y.-P."/>
            <person name="Lin X."/>
            <person name="Liu S.X."/>
            <person name="Liu Z.A."/>
            <person name="Luros J.S."/>
            <person name="Maiti R."/>
            <person name="Marziali A."/>
            <person name="Militscher J."/>
            <person name="Miranda M."/>
            <person name="Nguyen M."/>
            <person name="Nierman W.C."/>
            <person name="Osborne B.I."/>
            <person name="Pai G."/>
            <person name="Peterson J."/>
            <person name="Pham P.K."/>
            <person name="Rizzo M."/>
            <person name="Rooney T."/>
            <person name="Rowley D."/>
            <person name="Sakano H."/>
            <person name="Salzberg S.L."/>
            <person name="Schwartz J.R."/>
            <person name="Shinn P."/>
            <person name="Southwick A.M."/>
            <person name="Sun H."/>
            <person name="Tallon L.J."/>
            <person name="Tambunga G."/>
            <person name="Toriumi M.J."/>
            <person name="Town C.D."/>
            <person name="Utterback T."/>
            <person name="Van Aken S."/>
            <person name="Vaysberg M."/>
            <person name="Vysotskaia V.S."/>
            <person name="Walker M."/>
            <person name="Wu D."/>
            <person name="Yu G."/>
            <person name="Fraser C.M."/>
            <person name="Venter J.C."/>
            <person name="Davis R.W."/>
        </authorList>
    </citation>
    <scope>NUCLEOTIDE SEQUENCE [LARGE SCALE GENOMIC DNA]</scope>
    <source>
        <strain>cv. Columbia</strain>
    </source>
</reference>
<reference key="4">
    <citation type="journal article" date="2017" name="Plant J.">
        <title>Araport11: a complete reannotation of the Arabidopsis thaliana reference genome.</title>
        <authorList>
            <person name="Cheng C.Y."/>
            <person name="Krishnakumar V."/>
            <person name="Chan A.P."/>
            <person name="Thibaud-Nissen F."/>
            <person name="Schobel S."/>
            <person name="Town C.D."/>
        </authorList>
    </citation>
    <scope>GENOME REANNOTATION</scope>
    <source>
        <strain>cv. Columbia</strain>
    </source>
</reference>
<reference key="5">
    <citation type="submission" date="2005-03" db="EMBL/GenBank/DDBJ databases">
        <title>Large-scale analysis of RIKEN Arabidopsis full-length (RAFL) cDNAs.</title>
        <authorList>
            <person name="Totoki Y."/>
            <person name="Seki M."/>
            <person name="Ishida J."/>
            <person name="Nakajima M."/>
            <person name="Enju A."/>
            <person name="Kamiya A."/>
            <person name="Narusaka M."/>
            <person name="Shin-i T."/>
            <person name="Nakagawa M."/>
            <person name="Sakamoto N."/>
            <person name="Oishi K."/>
            <person name="Kohara Y."/>
            <person name="Kobayashi M."/>
            <person name="Toyoda A."/>
            <person name="Sakaki Y."/>
            <person name="Sakurai T."/>
            <person name="Iida K."/>
            <person name="Akiyama K."/>
            <person name="Satou M."/>
            <person name="Toyoda T."/>
            <person name="Konagaya A."/>
            <person name="Carninci P."/>
            <person name="Kawai J."/>
            <person name="Hayashizaki Y."/>
            <person name="Shinozaki K."/>
        </authorList>
    </citation>
    <scope>NUCLEOTIDE SEQUENCE [LARGE SCALE MRNA]</scope>
    <source>
        <strain>cv. Columbia</strain>
    </source>
</reference>
<reference key="6">
    <citation type="journal article" date="2001" name="Biochem. J.">
        <title>AtPIP5K1, an Arabidopsis thaliana phosphatidylinositol phosphate kinase, synthesizes PtdIns(3,4)P(2) and PtdIns(4,5)P(2) in vitro and is inhibited by phosphorylation.</title>
        <authorList>
            <person name="Westergren T."/>
            <person name="Dove S.K."/>
            <person name="Sommarin M."/>
            <person name="Pical C."/>
        </authorList>
    </citation>
    <scope>FUNCTION</scope>
    <scope>PHOSPHORYLATION</scope>
</reference>
<reference key="7">
    <citation type="journal article" date="2001" name="Plant J.">
        <title>An Arabidopsis inositol phospholipid kinase strongly expressed in procambial cells: synthesis of PtdIns(4,5)P2 and PtdIns(3,4,5)P3 in insect cells by 5-phosphorylation of precursors.</title>
        <authorList>
            <person name="Elge S."/>
            <person name="Brearley C."/>
            <person name="Xia H.J."/>
            <person name="Kehr J."/>
            <person name="Xue H.W."/>
            <person name="Mueller-Roeber B."/>
        </authorList>
    </citation>
    <scope>CHARACTERIZATION</scope>
    <scope>TISSUE SPECIFICITY</scope>
</reference>
<reference key="8">
    <citation type="journal article" date="2002" name="Plant Physiol.">
        <title>Inositol phospholipid metabolism in Arabidopsis. Characterized and putative isoforms of inositol phospholipid kinase and phosphoinositide-specific phospholipase C.</title>
        <authorList>
            <person name="Mueller-Roeber B."/>
            <person name="Pical C."/>
        </authorList>
    </citation>
    <scope>GENE FAMILY</scope>
    <scope>NOMENCLATURE</scope>
</reference>
<sequence length="752" mass="85945">MSDSEEDEEEEEASEVILSSVVQKKKKKNLRFGEEVERRDGLVLLAQSTPMVRSRSQGTTRRVTPTPLVDVEKPLPNGDLYIGSFSGGFPHGSGKYLWKDGCMYEGDWKRGKASGKGKFSWPSGATYEGEFKSGRMEGFGTFTGADGDTYRGTWVADRKHGHGQKRYANGDFYEGTWRRNLQDGRGRYVWRNGNQYTGEWRSGVISGKGLLVWPNGNRYEGLWENGIPKGNGVFTWSDGSSCVGAWNESNIMRSFFNGVEKNDLIVGNRKRSSVDSGAGSLGGEKVFPRICIWESDGEAGDITCDIIDNVEASMIYRDRISVDRDGFRQFKKNPCWFNGEAKKPGQTISKGHKKYDLMLNLQLGIRYSVGKHASIVRDLKQTDFDPKEKFWTRFPPEGTKTTPPHQSVDFRWKDYCPLVFRRLRELFQVDPAKYMLAICGNDALRELSSPGKSGSFFYLTQDDRFMIKTVKKSEVKVLLRMLPSYYKHVCQYENSLVTRFYGVHCVKPVGGQKTRFIVMGNLFCSEYRIQRRFDLKGSSHGRSTAKPEGEIDETTTLKDLDLNFSFRLQRNWYQELMKQIKRDCEFLEAERIMDYSLLVGVHFRDDNTGEKMGLSPFVLRSGRIDSYQNEKFMRGCRFLEAELQDMDRILAGRKPSIRLGANMPAKAERMARRSDFDQYSSGGASYPSHGEMYEVVLYFGVIDILQDYDITKKIEHAYKSLQADPASISAVDPKLYSKRFRDFISRIFIEEG</sequence>
<comment type="function">
    <text evidence="4">Catalyzes the synthesis of phosphatidylinositol 4,5-bisphosphate and phosphatidylinositol 3,4-bisphosphate.</text>
</comment>
<comment type="catalytic activity">
    <reaction>
        <text>a 1,2-diacyl-sn-glycero-3-phospho-(1D-myo-inositol 4-phosphate) + ATP = a 1,2-diacyl-sn-glycero-3-phospho-(1D-myo-inositol-4,5-bisphosphate) + ADP + H(+)</text>
        <dbReference type="Rhea" id="RHEA:14425"/>
        <dbReference type="ChEBI" id="CHEBI:15378"/>
        <dbReference type="ChEBI" id="CHEBI:30616"/>
        <dbReference type="ChEBI" id="CHEBI:58178"/>
        <dbReference type="ChEBI" id="CHEBI:58456"/>
        <dbReference type="ChEBI" id="CHEBI:456216"/>
        <dbReference type="EC" id="2.7.1.68"/>
    </reaction>
</comment>
<comment type="tissue specificity">
    <text evidence="3 5">Expressed in the whole plant, preferentially in roots. Strongly expressed in meristematic tissues, namely procambial cell layers.</text>
</comment>
<comment type="induction">
    <text evidence="5">By abscisic acid (ABA), drought and salt treatment.</text>
</comment>
<comment type="PTM">
    <text evidence="4">Phosphorylation inactivates the enzyme.</text>
</comment>
<comment type="sequence caution" evidence="6">
    <conflict type="erroneous gene model prediction">
        <sequence resource="EMBL-CDS" id="AAF86542"/>
    </conflict>
</comment>
<comment type="sequence caution" evidence="6">
    <conflict type="frameshift">
        <sequence resource="EMBL-CDS" id="BAA33501"/>
    </conflict>
</comment>
<dbReference type="EC" id="2.7.1.68"/>
<dbReference type="EMBL" id="AF019380">
    <property type="protein sequence ID" value="AAB82658.1"/>
    <property type="molecule type" value="mRNA"/>
</dbReference>
<dbReference type="EMBL" id="AB005902">
    <property type="protein sequence ID" value="BAA33501.1"/>
    <property type="status" value="ALT_FRAME"/>
    <property type="molecule type" value="mRNA"/>
</dbReference>
<dbReference type="EMBL" id="AC069252">
    <property type="protein sequence ID" value="AAF86542.1"/>
    <property type="status" value="ALT_SEQ"/>
    <property type="molecule type" value="Genomic_DNA"/>
</dbReference>
<dbReference type="EMBL" id="CP002684">
    <property type="protein sequence ID" value="AEE30181.1"/>
    <property type="molecule type" value="Genomic_DNA"/>
</dbReference>
<dbReference type="EMBL" id="AK221279">
    <property type="protein sequence ID" value="BAD93975.1"/>
    <property type="molecule type" value="mRNA"/>
</dbReference>
<dbReference type="PIR" id="T51821">
    <property type="entry name" value="T51821"/>
</dbReference>
<dbReference type="RefSeq" id="NP_173617.1">
    <property type="nucleotide sequence ID" value="NM_102047.4"/>
</dbReference>
<dbReference type="SMR" id="Q56YP2"/>
<dbReference type="BioGRID" id="24040">
    <property type="interactions" value="7"/>
</dbReference>
<dbReference type="FunCoup" id="Q56YP2">
    <property type="interactions" value="3213"/>
</dbReference>
<dbReference type="STRING" id="3702.Q56YP2"/>
<dbReference type="GlyGen" id="Q56YP2">
    <property type="glycosylation" value="1 site"/>
</dbReference>
<dbReference type="iPTMnet" id="Q56YP2"/>
<dbReference type="PaxDb" id="3702-AT1G21980.1"/>
<dbReference type="ProteomicsDB" id="234910"/>
<dbReference type="EnsemblPlants" id="AT1G21980.1">
    <property type="protein sequence ID" value="AT1G21980.1"/>
    <property type="gene ID" value="AT1G21980"/>
</dbReference>
<dbReference type="GeneID" id="838801"/>
<dbReference type="Gramene" id="AT1G21980.1">
    <property type="protein sequence ID" value="AT1G21980.1"/>
    <property type="gene ID" value="AT1G21980"/>
</dbReference>
<dbReference type="KEGG" id="ath:AT1G21980"/>
<dbReference type="Araport" id="AT1G21980"/>
<dbReference type="TAIR" id="AT1G21980">
    <property type="gene designation" value="PIP5K1"/>
</dbReference>
<dbReference type="eggNOG" id="KOG0229">
    <property type="taxonomic scope" value="Eukaryota"/>
</dbReference>
<dbReference type="HOGENOM" id="CLU_004312_6_4_1"/>
<dbReference type="InParanoid" id="Q56YP2"/>
<dbReference type="OMA" id="FRRNPCF"/>
<dbReference type="PhylomeDB" id="Q56YP2"/>
<dbReference type="BioCyc" id="ARA:AT1G21980-MONOMER"/>
<dbReference type="BRENDA" id="2.7.1.68">
    <property type="organism ID" value="399"/>
</dbReference>
<dbReference type="PRO" id="PR:Q56YP2"/>
<dbReference type="Proteomes" id="UP000006548">
    <property type="component" value="Chromosome 1"/>
</dbReference>
<dbReference type="ExpressionAtlas" id="Q56YP2">
    <property type="expression patterns" value="baseline and differential"/>
</dbReference>
<dbReference type="GO" id="GO:0005886">
    <property type="term" value="C:plasma membrane"/>
    <property type="evidence" value="ECO:0000314"/>
    <property type="project" value="TAIR"/>
</dbReference>
<dbReference type="GO" id="GO:0016308">
    <property type="term" value="F:1-phosphatidylinositol-4-phosphate 5-kinase activity"/>
    <property type="evidence" value="ECO:0000314"/>
    <property type="project" value="TAIR"/>
</dbReference>
<dbReference type="GO" id="GO:0051015">
    <property type="term" value="F:actin filament binding"/>
    <property type="evidence" value="ECO:0000314"/>
    <property type="project" value="TAIR"/>
</dbReference>
<dbReference type="GO" id="GO:0003785">
    <property type="term" value="F:actin monomer binding"/>
    <property type="evidence" value="ECO:0000314"/>
    <property type="project" value="TAIR"/>
</dbReference>
<dbReference type="GO" id="GO:0005524">
    <property type="term" value="F:ATP binding"/>
    <property type="evidence" value="ECO:0007669"/>
    <property type="project" value="UniProtKB-KW"/>
</dbReference>
<dbReference type="GO" id="GO:0046488">
    <property type="term" value="P:phosphatidylinositol metabolic process"/>
    <property type="evidence" value="ECO:0007669"/>
    <property type="project" value="InterPro"/>
</dbReference>
<dbReference type="CDD" id="cd17302">
    <property type="entry name" value="PIPKc_AtPIP5K_like"/>
    <property type="match status" value="1"/>
</dbReference>
<dbReference type="FunFam" id="2.20.110.10:FF:000015">
    <property type="entry name" value="Phosphatidylinositol 4-phosphate 5-kinase"/>
    <property type="match status" value="1"/>
</dbReference>
<dbReference type="FunFam" id="2.20.110.10:FF:000031">
    <property type="entry name" value="Phosphatidylinositol 4-phosphate 5-kinase"/>
    <property type="match status" value="1"/>
</dbReference>
<dbReference type="FunFam" id="2.20.110.10:FF:000037">
    <property type="entry name" value="Phosphatidylinositol 4-phosphate 5-kinase"/>
    <property type="match status" value="1"/>
</dbReference>
<dbReference type="FunFam" id="3.30.800.10:FF:000003">
    <property type="entry name" value="Phosphatidylinositol 4-phosphate 5-kinase"/>
    <property type="match status" value="1"/>
</dbReference>
<dbReference type="Gene3D" id="3.30.810.10">
    <property type="entry name" value="2-Layer Sandwich"/>
    <property type="match status" value="1"/>
</dbReference>
<dbReference type="Gene3D" id="2.20.110.10">
    <property type="entry name" value="Histone H3 K4-specific methyltransferase SET7/9 N-terminal domain"/>
    <property type="match status" value="2"/>
</dbReference>
<dbReference type="Gene3D" id="3.30.800.10">
    <property type="entry name" value="Phosphatidylinositol Phosphate Kinase II Beta"/>
    <property type="match status" value="1"/>
</dbReference>
<dbReference type="InterPro" id="IPR003409">
    <property type="entry name" value="MORN"/>
</dbReference>
<dbReference type="InterPro" id="IPR017163">
    <property type="entry name" value="PIno-4-P-5_kinase_pln"/>
</dbReference>
<dbReference type="InterPro" id="IPR027483">
    <property type="entry name" value="PInositol-4-P-4/5-kinase_C_sf"/>
</dbReference>
<dbReference type="InterPro" id="IPR002498">
    <property type="entry name" value="PInositol-4-P-4/5-kinase_core"/>
</dbReference>
<dbReference type="InterPro" id="IPR027484">
    <property type="entry name" value="PInositol-4-P-5-kinase_N"/>
</dbReference>
<dbReference type="InterPro" id="IPR023610">
    <property type="entry name" value="PInositol-4/5-P-5/4-kinase"/>
</dbReference>
<dbReference type="PANTHER" id="PTHR23086:SF98">
    <property type="entry name" value="PHOSPHATIDYLINOSITOL 4-PHOSPHATE 5-KINASE 1"/>
    <property type="match status" value="1"/>
</dbReference>
<dbReference type="PANTHER" id="PTHR23086">
    <property type="entry name" value="PHOSPHATIDYLINOSITOL-4-PHOSPHATE 5-KINASE"/>
    <property type="match status" value="1"/>
</dbReference>
<dbReference type="Pfam" id="PF02493">
    <property type="entry name" value="MORN"/>
    <property type="match status" value="7"/>
</dbReference>
<dbReference type="Pfam" id="PF01504">
    <property type="entry name" value="PIP5K"/>
    <property type="match status" value="1"/>
</dbReference>
<dbReference type="PIRSF" id="PIRSF037274">
    <property type="entry name" value="PIP5K_plant_prd"/>
    <property type="match status" value="1"/>
</dbReference>
<dbReference type="SMART" id="SM00698">
    <property type="entry name" value="MORN"/>
    <property type="match status" value="7"/>
</dbReference>
<dbReference type="SMART" id="SM00330">
    <property type="entry name" value="PIPKc"/>
    <property type="match status" value="1"/>
</dbReference>
<dbReference type="SUPFAM" id="SSF82185">
    <property type="entry name" value="Histone H3 K4-specific methyltransferase SET7/9 N-terminal domain"/>
    <property type="match status" value="2"/>
</dbReference>
<dbReference type="SUPFAM" id="SSF56104">
    <property type="entry name" value="SAICAR synthase-like"/>
    <property type="match status" value="1"/>
</dbReference>
<dbReference type="PROSITE" id="PS51455">
    <property type="entry name" value="PIPK"/>
    <property type="match status" value="1"/>
</dbReference>